<protein>
    <recommendedName>
        <fullName evidence="1">Membrane protein insertase YidC</fullName>
    </recommendedName>
    <alternativeName>
        <fullName evidence="1">Foldase YidC</fullName>
    </alternativeName>
    <alternativeName>
        <fullName evidence="1">Membrane integrase YidC</fullName>
    </alternativeName>
    <alternativeName>
        <fullName evidence="1">Membrane protein YidC</fullName>
    </alternativeName>
</protein>
<keyword id="KW-0997">Cell inner membrane</keyword>
<keyword id="KW-1003">Cell membrane</keyword>
<keyword id="KW-0143">Chaperone</keyword>
<keyword id="KW-0472">Membrane</keyword>
<keyword id="KW-0653">Protein transport</keyword>
<keyword id="KW-0812">Transmembrane</keyword>
<keyword id="KW-1133">Transmembrane helix</keyword>
<keyword id="KW-0813">Transport</keyword>
<reference key="1">
    <citation type="journal article" date="2010" name="Genome Biol. Evol.">
        <title>Continuing evolution of Burkholderia mallei through genome reduction and large-scale rearrangements.</title>
        <authorList>
            <person name="Losada L."/>
            <person name="Ronning C.M."/>
            <person name="DeShazer D."/>
            <person name="Woods D."/>
            <person name="Fedorova N."/>
            <person name="Kim H.S."/>
            <person name="Shabalina S.A."/>
            <person name="Pearson T.R."/>
            <person name="Brinkac L."/>
            <person name="Tan P."/>
            <person name="Nandi T."/>
            <person name="Crabtree J."/>
            <person name="Badger J."/>
            <person name="Beckstrom-Sternberg S."/>
            <person name="Saqib M."/>
            <person name="Schutzer S.E."/>
            <person name="Keim P."/>
            <person name="Nierman W.C."/>
        </authorList>
    </citation>
    <scope>NUCLEOTIDE SEQUENCE [LARGE SCALE GENOMIC DNA]</scope>
    <source>
        <strain>1710b</strain>
    </source>
</reference>
<feature type="chain" id="PRO_1000070072" description="Membrane protein insertase YidC">
    <location>
        <begin position="1"/>
        <end position="558"/>
    </location>
</feature>
<feature type="transmembrane region" description="Helical" evidence="1">
    <location>
        <begin position="3"/>
        <end position="23"/>
    </location>
</feature>
<feature type="transmembrane region" description="Helical" evidence="1">
    <location>
        <begin position="364"/>
        <end position="384"/>
    </location>
</feature>
<feature type="transmembrane region" description="Helical" evidence="1">
    <location>
        <begin position="438"/>
        <end position="458"/>
    </location>
</feature>
<feature type="transmembrane region" description="Helical" evidence="1">
    <location>
        <begin position="477"/>
        <end position="497"/>
    </location>
</feature>
<feature type="transmembrane region" description="Helical" evidence="1">
    <location>
        <begin position="508"/>
        <end position="528"/>
    </location>
</feature>
<dbReference type="EMBL" id="CP000124">
    <property type="protein sequence ID" value="ABA50098.1"/>
    <property type="molecule type" value="Genomic_DNA"/>
</dbReference>
<dbReference type="RefSeq" id="WP_004524584.1">
    <property type="nucleotide sequence ID" value="NC_007434.1"/>
</dbReference>
<dbReference type="SMR" id="Q3JXI3"/>
<dbReference type="EnsemblBacteria" id="ABA50098">
    <property type="protein sequence ID" value="ABA50098"/>
    <property type="gene ID" value="BURPS1710b_0304"/>
</dbReference>
<dbReference type="GeneID" id="93058590"/>
<dbReference type="KEGG" id="bpm:BURPS1710b_0304"/>
<dbReference type="HOGENOM" id="CLU_016535_3_0_4"/>
<dbReference type="Proteomes" id="UP000002700">
    <property type="component" value="Chromosome I"/>
</dbReference>
<dbReference type="GO" id="GO:0005886">
    <property type="term" value="C:plasma membrane"/>
    <property type="evidence" value="ECO:0007669"/>
    <property type="project" value="UniProtKB-SubCell"/>
</dbReference>
<dbReference type="GO" id="GO:0032977">
    <property type="term" value="F:membrane insertase activity"/>
    <property type="evidence" value="ECO:0007669"/>
    <property type="project" value="InterPro"/>
</dbReference>
<dbReference type="GO" id="GO:0051205">
    <property type="term" value="P:protein insertion into membrane"/>
    <property type="evidence" value="ECO:0007669"/>
    <property type="project" value="TreeGrafter"/>
</dbReference>
<dbReference type="GO" id="GO:0015031">
    <property type="term" value="P:protein transport"/>
    <property type="evidence" value="ECO:0007669"/>
    <property type="project" value="UniProtKB-KW"/>
</dbReference>
<dbReference type="CDD" id="cd20070">
    <property type="entry name" value="5TM_YidC_Alb3"/>
    <property type="match status" value="1"/>
</dbReference>
<dbReference type="CDD" id="cd19961">
    <property type="entry name" value="EcYidC-like_peri"/>
    <property type="match status" value="1"/>
</dbReference>
<dbReference type="Gene3D" id="2.70.98.90">
    <property type="match status" value="1"/>
</dbReference>
<dbReference type="HAMAP" id="MF_01810">
    <property type="entry name" value="YidC_type1"/>
    <property type="match status" value="1"/>
</dbReference>
<dbReference type="InterPro" id="IPR019998">
    <property type="entry name" value="Membr_insert_YidC"/>
</dbReference>
<dbReference type="InterPro" id="IPR028053">
    <property type="entry name" value="Membr_insert_YidC_N"/>
</dbReference>
<dbReference type="InterPro" id="IPR001708">
    <property type="entry name" value="YidC/ALB3/OXA1/COX18"/>
</dbReference>
<dbReference type="InterPro" id="IPR028055">
    <property type="entry name" value="YidC/Oxa/ALB_C"/>
</dbReference>
<dbReference type="InterPro" id="IPR047196">
    <property type="entry name" value="YidC_ALB_C"/>
</dbReference>
<dbReference type="InterPro" id="IPR038221">
    <property type="entry name" value="YidC_periplasmic_sf"/>
</dbReference>
<dbReference type="NCBIfam" id="NF002352">
    <property type="entry name" value="PRK01318.1-3"/>
    <property type="match status" value="1"/>
</dbReference>
<dbReference type="NCBIfam" id="NF002353">
    <property type="entry name" value="PRK01318.1-4"/>
    <property type="match status" value="1"/>
</dbReference>
<dbReference type="NCBIfam" id="TIGR03593">
    <property type="entry name" value="yidC_nterm"/>
    <property type="match status" value="1"/>
</dbReference>
<dbReference type="NCBIfam" id="TIGR03592">
    <property type="entry name" value="yidC_oxa1_cterm"/>
    <property type="match status" value="1"/>
</dbReference>
<dbReference type="PANTHER" id="PTHR12428:SF65">
    <property type="entry name" value="CYTOCHROME C OXIDASE ASSEMBLY PROTEIN COX18, MITOCHONDRIAL"/>
    <property type="match status" value="1"/>
</dbReference>
<dbReference type="PANTHER" id="PTHR12428">
    <property type="entry name" value="OXA1"/>
    <property type="match status" value="1"/>
</dbReference>
<dbReference type="Pfam" id="PF02096">
    <property type="entry name" value="60KD_IMP"/>
    <property type="match status" value="1"/>
</dbReference>
<dbReference type="Pfam" id="PF14849">
    <property type="entry name" value="YidC_periplas"/>
    <property type="match status" value="1"/>
</dbReference>
<dbReference type="PRINTS" id="PR00701">
    <property type="entry name" value="60KDINNERMP"/>
</dbReference>
<dbReference type="PRINTS" id="PR01900">
    <property type="entry name" value="YIDCPROTEIN"/>
</dbReference>
<sequence>MDIKRTVLWVIFFMSAVMLFDNWQRSHGRPSMFFPNVTQTNTASNATNGNGASGASAAAAANALPAAATGAAPATTAPAAQAQLVRFSTDVYNGEIDTRGGTLAKLTLTKAGDGKQPDLSVTLFDHTANHTYLARTGLLGGDFPNHNDVYAQVAGPTSLAADQNTLKLSFESPVKGGVKVVKTYTFTRGSYVIGVDTKIENVGAAPVTPSVYMELVRDNSSVETPMFSHTFLGPAVYTDQKHFQKITFGDIDKNKADYVTSADNGWIAMVQHYFASAWIPQSGAKRDIYVEKIDPTLYRVGVKQPVAAIAPGQSADVSARLFAGPEEERMLEGIAPGLELVKDYGWVTIIAKPLFWLLEKIHGFVGNWGWAIVLLTLLIKAVFFPLSAASYKSMARMKEITPRMQALRERFKSDPQKMNAALMELYKTEKVNPFGGCLPVVIQIPVFISLYWVLLASVEMRGAPWVLWIHDLSQRDPYFILPVLMAVSMFVQTKLNPTPPDPVQAKMMMFMPIAFSVMFFFFPAGLVLYYVVNNVLSIAQQYYITRTLGGAAAKKKAS</sequence>
<gene>
    <name evidence="1" type="primary">yidC</name>
    <name type="ordered locus">BURPS1710b_0304</name>
</gene>
<proteinExistence type="inferred from homology"/>
<organism>
    <name type="scientific">Burkholderia pseudomallei (strain 1710b)</name>
    <dbReference type="NCBI Taxonomy" id="320372"/>
    <lineage>
        <taxon>Bacteria</taxon>
        <taxon>Pseudomonadati</taxon>
        <taxon>Pseudomonadota</taxon>
        <taxon>Betaproteobacteria</taxon>
        <taxon>Burkholderiales</taxon>
        <taxon>Burkholderiaceae</taxon>
        <taxon>Burkholderia</taxon>
        <taxon>pseudomallei group</taxon>
    </lineage>
</organism>
<comment type="function">
    <text evidence="1">Required for the insertion and/or proper folding and/or complex formation of integral membrane proteins into the membrane. Involved in integration of membrane proteins that insert both dependently and independently of the Sec translocase complex, as well as at least some lipoproteins. Aids folding of multispanning membrane proteins.</text>
</comment>
<comment type="subunit">
    <text evidence="1">Interacts with the Sec translocase complex via SecD. Specifically interacts with transmembrane segments of nascent integral membrane proteins during membrane integration.</text>
</comment>
<comment type="subcellular location">
    <subcellularLocation>
        <location evidence="1">Cell inner membrane</location>
        <topology evidence="1">Multi-pass membrane protein</topology>
    </subcellularLocation>
</comment>
<comment type="similarity">
    <text evidence="1">Belongs to the OXA1/ALB3/YidC family. Type 1 subfamily.</text>
</comment>
<name>YIDC_BURP1</name>
<evidence type="ECO:0000255" key="1">
    <source>
        <dbReference type="HAMAP-Rule" id="MF_01810"/>
    </source>
</evidence>
<accession>Q3JXI3</accession>